<name>Y1981_DESHD</name>
<protein>
    <recommendedName>
        <fullName evidence="1">UPF0251 protein Dhaf_1981</fullName>
    </recommendedName>
</protein>
<sequence>MPRPMKWRKVCCLPESNRFGPLDLNAGDQYQVKMTVDEYETIRLIDLEGFTQEECAKKMNVARTTVQGIYIEARKKLAESLVNGKVLQIEGGEYRLCDGLGNGCGQGCYKRRRRMGCSGKEEGED</sequence>
<reference key="1">
    <citation type="journal article" date="2012" name="BMC Microbiol.">
        <title>Genome sequence of Desulfitobacterium hafniense DCB-2, a Gram-positive anaerobe capable of dehalogenation and metal reduction.</title>
        <authorList>
            <person name="Kim S.H."/>
            <person name="Harzman C."/>
            <person name="Davis J.K."/>
            <person name="Hutcheson R."/>
            <person name="Broderick J.B."/>
            <person name="Marsh T.L."/>
            <person name="Tiedje J.M."/>
        </authorList>
    </citation>
    <scope>NUCLEOTIDE SEQUENCE [LARGE SCALE GENOMIC DNA]</scope>
    <source>
        <strain>DSM 10664 / DCB-2</strain>
    </source>
</reference>
<evidence type="ECO:0000255" key="1">
    <source>
        <dbReference type="HAMAP-Rule" id="MF_00674"/>
    </source>
</evidence>
<gene>
    <name type="ordered locus">Dhaf_1981</name>
</gene>
<dbReference type="EMBL" id="CP001336">
    <property type="protein sequence ID" value="ACL20021.1"/>
    <property type="molecule type" value="Genomic_DNA"/>
</dbReference>
<dbReference type="RefSeq" id="WP_015943769.1">
    <property type="nucleotide sequence ID" value="NC_011830.1"/>
</dbReference>
<dbReference type="SMR" id="B8FRA6"/>
<dbReference type="KEGG" id="dhd:Dhaf_1981"/>
<dbReference type="HOGENOM" id="CLU_094511_1_0_9"/>
<dbReference type="Proteomes" id="UP000007726">
    <property type="component" value="Chromosome"/>
</dbReference>
<dbReference type="Gene3D" id="1.10.10.10">
    <property type="entry name" value="Winged helix-like DNA-binding domain superfamily/Winged helix DNA-binding domain"/>
    <property type="match status" value="1"/>
</dbReference>
<dbReference type="HAMAP" id="MF_00674">
    <property type="entry name" value="UPF0251"/>
    <property type="match status" value="1"/>
</dbReference>
<dbReference type="InterPro" id="IPR013324">
    <property type="entry name" value="RNA_pol_sigma_r3/r4-like"/>
</dbReference>
<dbReference type="InterPro" id="IPR002852">
    <property type="entry name" value="UPF0251"/>
</dbReference>
<dbReference type="InterPro" id="IPR036388">
    <property type="entry name" value="WH-like_DNA-bd_sf"/>
</dbReference>
<dbReference type="PANTHER" id="PTHR37478">
    <property type="match status" value="1"/>
</dbReference>
<dbReference type="PANTHER" id="PTHR37478:SF2">
    <property type="entry name" value="UPF0251 PROTEIN TK0562"/>
    <property type="match status" value="1"/>
</dbReference>
<dbReference type="Pfam" id="PF02001">
    <property type="entry name" value="DUF134"/>
    <property type="match status" value="1"/>
</dbReference>
<dbReference type="SUPFAM" id="SSF88659">
    <property type="entry name" value="Sigma3 and sigma4 domains of RNA polymerase sigma factors"/>
    <property type="match status" value="1"/>
</dbReference>
<organism>
    <name type="scientific">Desulfitobacterium hafniense (strain DSM 10664 / DCB-2)</name>
    <dbReference type="NCBI Taxonomy" id="272564"/>
    <lineage>
        <taxon>Bacteria</taxon>
        <taxon>Bacillati</taxon>
        <taxon>Bacillota</taxon>
        <taxon>Clostridia</taxon>
        <taxon>Eubacteriales</taxon>
        <taxon>Desulfitobacteriaceae</taxon>
        <taxon>Desulfitobacterium</taxon>
    </lineage>
</organism>
<feature type="chain" id="PRO_1000147683" description="UPF0251 protein Dhaf_1981">
    <location>
        <begin position="1"/>
        <end position="125"/>
    </location>
</feature>
<accession>B8FRA6</accession>
<proteinExistence type="inferred from homology"/>
<comment type="similarity">
    <text evidence="1">Belongs to the UPF0251 family.</text>
</comment>